<comment type="alternative products">
    <event type="alternative splicing"/>
    <isoform>
        <id>Q5VT79-1</id>
        <name evidence="5">1</name>
        <sequence type="displayed"/>
    </isoform>
    <isoform>
        <id>Q5VT79-2</id>
        <name evidence="5 6">2</name>
        <sequence type="described" ref="VSP_052782 VSP_052783 VSP_052784"/>
    </isoform>
</comment>
<comment type="domain">
    <text evidence="2">A pair of annexin repeats may form one binding site for calcium and phospholipid.</text>
</comment>
<comment type="similarity">
    <text evidence="3">Belongs to the annexin family.</text>
</comment>
<accession>Q5VT79</accession>
<accession>A0A0B4J2D4</accession>
<accession>B2R939</accession>
<accession>Q53FY2</accession>
<accession>Q5VT78</accession>
<accession>Q96H89</accession>
<organism>
    <name type="scientific">Homo sapiens</name>
    <name type="common">Human</name>
    <dbReference type="NCBI Taxonomy" id="9606"/>
    <lineage>
        <taxon>Eukaryota</taxon>
        <taxon>Metazoa</taxon>
        <taxon>Chordata</taxon>
        <taxon>Craniata</taxon>
        <taxon>Vertebrata</taxon>
        <taxon>Euteleostomi</taxon>
        <taxon>Mammalia</taxon>
        <taxon>Eutheria</taxon>
        <taxon>Euarchontoglires</taxon>
        <taxon>Primates</taxon>
        <taxon>Haplorrhini</taxon>
        <taxon>Catarrhini</taxon>
        <taxon>Hominidae</taxon>
        <taxon>Homo</taxon>
    </lineage>
</organism>
<keyword id="KW-0025">Alternative splicing</keyword>
<keyword id="KW-0041">Annexin</keyword>
<keyword id="KW-0106">Calcium</keyword>
<keyword id="KW-0111">Calcium/phospholipid-binding</keyword>
<keyword id="KW-0479">Metal-binding</keyword>
<keyword id="KW-1267">Proteomics identification</keyword>
<keyword id="KW-1185">Reference proteome</keyword>
<keyword id="KW-0677">Repeat</keyword>
<feature type="chain" id="PRO_0000328939" description="Annexin A8-like protein 1">
    <location>
        <begin position="1"/>
        <end position="327"/>
    </location>
</feature>
<feature type="repeat" description="Annexin 1" evidence="3">
    <location>
        <begin position="21"/>
        <end position="92"/>
    </location>
</feature>
<feature type="repeat" description="Annexin 2" evidence="3">
    <location>
        <begin position="93"/>
        <end position="164"/>
    </location>
</feature>
<feature type="repeat" description="Annexin 3" evidence="3">
    <location>
        <begin position="177"/>
        <end position="249"/>
    </location>
</feature>
<feature type="repeat" description="Annexin 4" evidence="3">
    <location>
        <begin position="253"/>
        <end position="324"/>
    </location>
</feature>
<feature type="binding site" evidence="1">
    <location>
        <position position="266"/>
    </location>
    <ligand>
        <name>Ca(2+)</name>
        <dbReference type="ChEBI" id="CHEBI:29108"/>
    </ligand>
</feature>
<feature type="binding site" evidence="1">
    <location>
        <position position="268"/>
    </location>
    <ligand>
        <name>Ca(2+)</name>
        <dbReference type="ChEBI" id="CHEBI:29108"/>
    </ligand>
</feature>
<feature type="binding site" evidence="1">
    <location>
        <position position="270"/>
    </location>
    <ligand>
        <name>Ca(2+)</name>
        <dbReference type="ChEBI" id="CHEBI:29108"/>
    </ligand>
</feature>
<feature type="binding site" evidence="1">
    <location>
        <position position="310"/>
    </location>
    <ligand>
        <name>Ca(2+)</name>
        <dbReference type="ChEBI" id="CHEBI:29108"/>
    </ligand>
</feature>
<feature type="splice variant" id="VSP_052782" description="In isoform 2." evidence="8 9">
    <original>G</original>
    <variation>GVGSQLLSHQAAAFAFPSSALTSVSPWGQQGHLCCNPAG</variation>
    <location>
        <position position="38"/>
    </location>
</feature>
<feature type="splice variant" id="VSP_052783" description="In isoform 2." evidence="8 9">
    <location>
        <begin position="109"/>
        <end position="165"/>
    </location>
</feature>
<feature type="splice variant" id="VSP_052784" description="In isoform 2." evidence="8 9">
    <location>
        <begin position="217"/>
        <end position="248"/>
    </location>
</feature>
<feature type="sequence variant" id="VAR_067447" description="In dbSNP:rs201596209." evidence="4 7">
    <original>A</original>
    <variation>V</variation>
    <location>
        <position position="134"/>
    </location>
</feature>
<feature type="sequence variant" id="VAR_048254" description="In dbSNP:rs1487921382.">
    <original>A</original>
    <variation>G</variation>
    <location>
        <position position="177"/>
    </location>
</feature>
<feature type="sequence variant" id="VAR_067448" description="In dbSNP:rs1249096344." evidence="5">
    <original>K</original>
    <variation>N</variation>
    <location>
        <position position="192"/>
    </location>
</feature>
<name>AXA81_HUMAN</name>
<evidence type="ECO:0000250" key="1"/>
<evidence type="ECO:0000250" key="2">
    <source>
        <dbReference type="UniProtKB" id="P13928"/>
    </source>
</evidence>
<evidence type="ECO:0000255" key="3">
    <source>
        <dbReference type="PROSITE-ProRule" id="PRU01245"/>
    </source>
</evidence>
<evidence type="ECO:0000269" key="4">
    <source>
    </source>
</evidence>
<evidence type="ECO:0000269" key="5">
    <source>
    </source>
</evidence>
<evidence type="ECO:0000269" key="6">
    <source>
    </source>
</evidence>
<evidence type="ECO:0000269" key="7">
    <source ref="1"/>
</evidence>
<evidence type="ECO:0000303" key="8">
    <source>
    </source>
</evidence>
<evidence type="ECO:0000303" key="9">
    <source>
    </source>
</evidence>
<evidence type="ECO:0000305" key="10"/>
<evidence type="ECO:0000312" key="11">
    <source>
        <dbReference type="EMBL" id="AAH08813.3"/>
    </source>
</evidence>
<evidence type="ECO:0000312" key="12">
    <source>
        <dbReference type="EMBL" id="BAD96869.1"/>
    </source>
</evidence>
<evidence type="ECO:0000312" key="13">
    <source>
        <dbReference type="EMBL" id="CAH70574.1"/>
    </source>
</evidence>
<evidence type="ECO:0000312" key="14">
    <source>
        <dbReference type="HGNC" id="HGNC:23334"/>
    </source>
</evidence>
<dbReference type="EMBL" id="AK223149">
    <property type="protein sequence ID" value="BAD96869.1"/>
    <property type="molecule type" value="mRNA"/>
</dbReference>
<dbReference type="EMBL" id="AK313626">
    <property type="protein sequence ID" value="BAG36386.1"/>
    <property type="molecule type" value="mRNA"/>
</dbReference>
<dbReference type="EMBL" id="AC244230">
    <property type="status" value="NOT_ANNOTATED_CDS"/>
    <property type="molecule type" value="Genomic_DNA"/>
</dbReference>
<dbReference type="EMBL" id="AL603965">
    <property type="protein sequence ID" value="CAH70574.1"/>
    <property type="molecule type" value="Genomic_DNA"/>
</dbReference>
<dbReference type="EMBL" id="AL603965">
    <property type="protein sequence ID" value="CAH70575.1"/>
    <property type="molecule type" value="Genomic_DNA"/>
</dbReference>
<dbReference type="EMBL" id="AL732434">
    <property type="status" value="NOT_ANNOTATED_CDS"/>
    <property type="molecule type" value="Genomic_DNA"/>
</dbReference>
<dbReference type="EMBL" id="BC008813">
    <property type="protein sequence ID" value="AAH08813.3"/>
    <property type="molecule type" value="mRNA"/>
</dbReference>
<dbReference type="CCDS" id="CCDS73097.1">
    <molecule id="Q5VT79-2"/>
</dbReference>
<dbReference type="CCDS" id="CCDS73098.1">
    <molecule id="Q5VT79-1"/>
</dbReference>
<dbReference type="RefSeq" id="NP_001092315.2">
    <molecule id="Q5VT79-1"/>
    <property type="nucleotide sequence ID" value="NM_001098845.3"/>
</dbReference>
<dbReference type="RefSeq" id="NP_001265853.1">
    <molecule id="Q5VT79-2"/>
    <property type="nucleotide sequence ID" value="NM_001278924.2"/>
</dbReference>
<dbReference type="SMR" id="Q5VT79"/>
<dbReference type="BioGRID" id="608549">
    <property type="interactions" value="20"/>
</dbReference>
<dbReference type="FunCoup" id="Q5VT79">
    <property type="interactions" value="104"/>
</dbReference>
<dbReference type="IntAct" id="Q5VT79">
    <property type="interactions" value="10"/>
</dbReference>
<dbReference type="STRING" id="9606.ENSP00000480221"/>
<dbReference type="GlyGen" id="Q5VT79">
    <property type="glycosylation" value="1 site, 1 O-linked glycan (1 site)"/>
</dbReference>
<dbReference type="iPTMnet" id="Q5VT79"/>
<dbReference type="PhosphoSitePlus" id="Q5VT79"/>
<dbReference type="SwissPalm" id="Q5VT79"/>
<dbReference type="BioMuta" id="ANXA8L1"/>
<dbReference type="DMDM" id="74756781"/>
<dbReference type="jPOST" id="Q5VT79"/>
<dbReference type="MassIVE" id="Q5VT79"/>
<dbReference type="PaxDb" id="9606-ENSP00000480221"/>
<dbReference type="PeptideAtlas" id="Q5VT79"/>
<dbReference type="ProteomicsDB" id="65310">
    <molecule id="Q5VT79-1"/>
</dbReference>
<dbReference type="ProteomicsDB" id="65311">
    <molecule id="Q5VT79-2"/>
</dbReference>
<dbReference type="Antibodypedia" id="74698">
    <property type="antibodies" value="107 antibodies from 19 providers"/>
</dbReference>
<dbReference type="DNASU" id="244"/>
<dbReference type="Ensembl" id="ENST00000619162.5">
    <molecule id="Q5VT79-1"/>
    <property type="protein sequence ID" value="ENSP00000480221.1"/>
    <property type="gene ID" value="ENSG00000264230.9"/>
</dbReference>
<dbReference type="Ensembl" id="ENST00000622769.4">
    <molecule id="Q5VT79-2"/>
    <property type="protein sequence ID" value="ENSP00000483608.1"/>
    <property type="gene ID" value="ENSG00000264230.9"/>
</dbReference>
<dbReference type="GeneID" id="728113"/>
<dbReference type="KEGG" id="hsa:728113"/>
<dbReference type="MANE-Select" id="ENST00000619162.5">
    <property type="protein sequence ID" value="ENSP00000480221.1"/>
    <property type="RefSeq nucleotide sequence ID" value="NM_001098845.3"/>
    <property type="RefSeq protein sequence ID" value="NP_001092315.2"/>
</dbReference>
<dbReference type="AGR" id="HGNC:23334"/>
<dbReference type="CTD" id="728113"/>
<dbReference type="DisGeNET" id="728113"/>
<dbReference type="GeneCards" id="ANXA8L1"/>
<dbReference type="HGNC" id="HGNC:23334">
    <property type="gene designation" value="ANXA8L1"/>
</dbReference>
<dbReference type="HPA" id="ENSG00000264230">
    <property type="expression patterns" value="Group enriched (esophagus, skin, vagina)"/>
</dbReference>
<dbReference type="neXtProt" id="NX_Q5VT79"/>
<dbReference type="OpenTargets" id="ENSG00000264230"/>
<dbReference type="VEuPathDB" id="HostDB:ENSG00000264230"/>
<dbReference type="eggNOG" id="KOG0819">
    <property type="taxonomic scope" value="Eukaryota"/>
</dbReference>
<dbReference type="GeneTree" id="ENSGT00940000161044"/>
<dbReference type="InParanoid" id="Q5VT79"/>
<dbReference type="OMA" id="CYVEHDV"/>
<dbReference type="OrthoDB" id="37886at2759"/>
<dbReference type="PAN-GO" id="Q5VT79">
    <property type="GO annotations" value="6 GO annotations based on evolutionary models"/>
</dbReference>
<dbReference type="TreeFam" id="TF105452"/>
<dbReference type="PathwayCommons" id="Q5VT79"/>
<dbReference type="SignaLink" id="Q5VT79"/>
<dbReference type="BioGRID-ORCS" id="728113">
    <property type="hits" value="45 hits in 1036 CRISPR screens"/>
</dbReference>
<dbReference type="ChiTaRS" id="ANXA8L1">
    <property type="organism name" value="human"/>
</dbReference>
<dbReference type="GenomeRNAi" id="728113"/>
<dbReference type="Pharos" id="Q5VT79">
    <property type="development level" value="Tbio"/>
</dbReference>
<dbReference type="PRO" id="PR:Q5VT79"/>
<dbReference type="Proteomes" id="UP000005640">
    <property type="component" value="Chromosome 10"/>
</dbReference>
<dbReference type="RNAct" id="Q5VT79">
    <property type="molecule type" value="protein"/>
</dbReference>
<dbReference type="Bgee" id="ENSG00000264230">
    <property type="expression patterns" value="Expressed in skin of abdomen and 86 other cell types or tissues"/>
</dbReference>
<dbReference type="ExpressionAtlas" id="Q5VT79">
    <property type="expression patterns" value="baseline and differential"/>
</dbReference>
<dbReference type="GO" id="GO:0005737">
    <property type="term" value="C:cytoplasm"/>
    <property type="evidence" value="ECO:0000318"/>
    <property type="project" value="GO_Central"/>
</dbReference>
<dbReference type="GO" id="GO:0042383">
    <property type="term" value="C:sarcolemma"/>
    <property type="evidence" value="ECO:0000318"/>
    <property type="project" value="GO_Central"/>
</dbReference>
<dbReference type="GO" id="GO:0012506">
    <property type="term" value="C:vesicle membrane"/>
    <property type="evidence" value="ECO:0000318"/>
    <property type="project" value="GO_Central"/>
</dbReference>
<dbReference type="GO" id="GO:0005509">
    <property type="term" value="F:calcium ion binding"/>
    <property type="evidence" value="ECO:0007669"/>
    <property type="project" value="InterPro"/>
</dbReference>
<dbReference type="GO" id="GO:0005544">
    <property type="term" value="F:calcium-dependent phospholipid binding"/>
    <property type="evidence" value="ECO:0000318"/>
    <property type="project" value="GO_Central"/>
</dbReference>
<dbReference type="GO" id="GO:0001786">
    <property type="term" value="F:phosphatidylserine binding"/>
    <property type="evidence" value="ECO:0000318"/>
    <property type="project" value="GO_Central"/>
</dbReference>
<dbReference type="GO" id="GO:0016197">
    <property type="term" value="P:endosomal transport"/>
    <property type="evidence" value="ECO:0000318"/>
    <property type="project" value="GO_Central"/>
</dbReference>
<dbReference type="GO" id="GO:0007032">
    <property type="term" value="P:endosome organization"/>
    <property type="evidence" value="ECO:0000318"/>
    <property type="project" value="GO_Central"/>
</dbReference>
<dbReference type="FunFam" id="1.10.220.10:FF:000001">
    <property type="entry name" value="Annexin"/>
    <property type="match status" value="1"/>
</dbReference>
<dbReference type="FunFam" id="1.10.220.10:FF:000002">
    <property type="entry name" value="Annexin"/>
    <property type="match status" value="1"/>
</dbReference>
<dbReference type="FunFam" id="1.10.220.10:FF:000003">
    <property type="entry name" value="Annexin"/>
    <property type="match status" value="1"/>
</dbReference>
<dbReference type="FunFam" id="1.10.220.10:FF:000004">
    <property type="entry name" value="Annexin"/>
    <property type="match status" value="1"/>
</dbReference>
<dbReference type="Gene3D" id="1.10.220.10">
    <property type="entry name" value="Annexin"/>
    <property type="match status" value="4"/>
</dbReference>
<dbReference type="InterPro" id="IPR001464">
    <property type="entry name" value="Annexin"/>
</dbReference>
<dbReference type="InterPro" id="IPR018502">
    <property type="entry name" value="Annexin_repeat"/>
</dbReference>
<dbReference type="InterPro" id="IPR018252">
    <property type="entry name" value="Annexin_repeat_CS"/>
</dbReference>
<dbReference type="InterPro" id="IPR037104">
    <property type="entry name" value="Annexin_sf"/>
</dbReference>
<dbReference type="InterPro" id="IPR009115">
    <property type="entry name" value="ANX8"/>
</dbReference>
<dbReference type="PANTHER" id="PTHR10502">
    <property type="entry name" value="ANNEXIN"/>
    <property type="match status" value="1"/>
</dbReference>
<dbReference type="PANTHER" id="PTHR10502:SF133">
    <property type="entry name" value="ANNEXIN A8-RELATED"/>
    <property type="match status" value="1"/>
</dbReference>
<dbReference type="Pfam" id="PF00191">
    <property type="entry name" value="Annexin"/>
    <property type="match status" value="4"/>
</dbReference>
<dbReference type="PRINTS" id="PR00196">
    <property type="entry name" value="ANNEXIN"/>
</dbReference>
<dbReference type="PRINTS" id="PR01808">
    <property type="entry name" value="ANNEXINVIII"/>
</dbReference>
<dbReference type="SMART" id="SM00335">
    <property type="entry name" value="ANX"/>
    <property type="match status" value="4"/>
</dbReference>
<dbReference type="SUPFAM" id="SSF47874">
    <property type="entry name" value="Annexin"/>
    <property type="match status" value="1"/>
</dbReference>
<dbReference type="PROSITE" id="PS00223">
    <property type="entry name" value="ANNEXIN_1"/>
    <property type="match status" value="4"/>
</dbReference>
<dbReference type="PROSITE" id="PS51897">
    <property type="entry name" value="ANNEXIN_2"/>
    <property type="match status" value="4"/>
</dbReference>
<proteinExistence type="evidence at protein level"/>
<gene>
    <name evidence="14" type="primary">ANXA8L1</name>
    <name evidence="14" type="synonym">ANXA8L2</name>
</gene>
<reference evidence="10 12" key="1">
    <citation type="submission" date="2005-04" db="EMBL/GenBank/DDBJ databases">
        <authorList>
            <person name="Suzuki Y."/>
            <person name="Sugano S."/>
            <person name="Totoki Y."/>
            <person name="Toyoda A."/>
            <person name="Takeda T."/>
            <person name="Sakaki Y."/>
            <person name="Tanaka A."/>
            <person name="Yokoyama S."/>
        </authorList>
    </citation>
    <scope>NUCLEOTIDE SEQUENCE [LARGE SCALE MRNA] (ISOFORM 1)</scope>
    <scope>VARIANT VAL-134</scope>
    <source>
        <tissue evidence="12">Lung</tissue>
    </source>
</reference>
<reference key="2">
    <citation type="journal article" date="2004" name="Nat. Genet.">
        <title>Complete sequencing and characterization of 21,243 full-length human cDNAs.</title>
        <authorList>
            <person name="Ota T."/>
            <person name="Suzuki Y."/>
            <person name="Nishikawa T."/>
            <person name="Otsuki T."/>
            <person name="Sugiyama T."/>
            <person name="Irie R."/>
            <person name="Wakamatsu A."/>
            <person name="Hayashi K."/>
            <person name="Sato H."/>
            <person name="Nagai K."/>
            <person name="Kimura K."/>
            <person name="Makita H."/>
            <person name="Sekine M."/>
            <person name="Obayashi M."/>
            <person name="Nishi T."/>
            <person name="Shibahara T."/>
            <person name="Tanaka T."/>
            <person name="Ishii S."/>
            <person name="Yamamoto J."/>
            <person name="Saito K."/>
            <person name="Kawai Y."/>
            <person name="Isono Y."/>
            <person name="Nakamura Y."/>
            <person name="Nagahari K."/>
            <person name="Murakami K."/>
            <person name="Yasuda T."/>
            <person name="Iwayanagi T."/>
            <person name="Wagatsuma M."/>
            <person name="Shiratori A."/>
            <person name="Sudo H."/>
            <person name="Hosoiri T."/>
            <person name="Kaku Y."/>
            <person name="Kodaira H."/>
            <person name="Kondo H."/>
            <person name="Sugawara M."/>
            <person name="Takahashi M."/>
            <person name="Kanda K."/>
            <person name="Yokoi T."/>
            <person name="Furuya T."/>
            <person name="Kikkawa E."/>
            <person name="Omura Y."/>
            <person name="Abe K."/>
            <person name="Kamihara K."/>
            <person name="Katsuta N."/>
            <person name="Sato K."/>
            <person name="Tanikawa M."/>
            <person name="Yamazaki M."/>
            <person name="Ninomiya K."/>
            <person name="Ishibashi T."/>
            <person name="Yamashita H."/>
            <person name="Murakawa K."/>
            <person name="Fujimori K."/>
            <person name="Tanai H."/>
            <person name="Kimata M."/>
            <person name="Watanabe M."/>
            <person name="Hiraoka S."/>
            <person name="Chiba Y."/>
            <person name="Ishida S."/>
            <person name="Ono Y."/>
            <person name="Takiguchi S."/>
            <person name="Watanabe S."/>
            <person name="Yosida M."/>
            <person name="Hotuta T."/>
            <person name="Kusano J."/>
            <person name="Kanehori K."/>
            <person name="Takahashi-Fujii A."/>
            <person name="Hara H."/>
            <person name="Tanase T.-O."/>
            <person name="Nomura Y."/>
            <person name="Togiya S."/>
            <person name="Komai F."/>
            <person name="Hara R."/>
            <person name="Takeuchi K."/>
            <person name="Arita M."/>
            <person name="Imose N."/>
            <person name="Musashino K."/>
            <person name="Yuuki H."/>
            <person name="Oshima A."/>
            <person name="Sasaki N."/>
            <person name="Aotsuka S."/>
            <person name="Yoshikawa Y."/>
            <person name="Matsunawa H."/>
            <person name="Ichihara T."/>
            <person name="Shiohata N."/>
            <person name="Sano S."/>
            <person name="Moriya S."/>
            <person name="Momiyama H."/>
            <person name="Satoh N."/>
            <person name="Takami S."/>
            <person name="Terashima Y."/>
            <person name="Suzuki O."/>
            <person name="Nakagawa S."/>
            <person name="Senoh A."/>
            <person name="Mizoguchi H."/>
            <person name="Goto Y."/>
            <person name="Shimizu F."/>
            <person name="Wakebe H."/>
            <person name="Hishigaki H."/>
            <person name="Watanabe T."/>
            <person name="Sugiyama A."/>
            <person name="Takemoto M."/>
            <person name="Kawakami B."/>
            <person name="Yamazaki M."/>
            <person name="Watanabe K."/>
            <person name="Kumagai A."/>
            <person name="Itakura S."/>
            <person name="Fukuzumi Y."/>
            <person name="Fujimori Y."/>
            <person name="Komiyama M."/>
            <person name="Tashiro H."/>
            <person name="Tanigami A."/>
            <person name="Fujiwara T."/>
            <person name="Ono T."/>
            <person name="Yamada K."/>
            <person name="Fujii Y."/>
            <person name="Ozaki K."/>
            <person name="Hirao M."/>
            <person name="Ohmori Y."/>
            <person name="Kawabata A."/>
            <person name="Hikiji T."/>
            <person name="Kobatake N."/>
            <person name="Inagaki H."/>
            <person name="Ikema Y."/>
            <person name="Okamoto S."/>
            <person name="Okitani R."/>
            <person name="Kawakami T."/>
            <person name="Noguchi S."/>
            <person name="Itoh T."/>
            <person name="Shigeta K."/>
            <person name="Senba T."/>
            <person name="Matsumura K."/>
            <person name="Nakajima Y."/>
            <person name="Mizuno T."/>
            <person name="Morinaga M."/>
            <person name="Sasaki M."/>
            <person name="Togashi T."/>
            <person name="Oyama M."/>
            <person name="Hata H."/>
            <person name="Watanabe M."/>
            <person name="Komatsu T."/>
            <person name="Mizushima-Sugano J."/>
            <person name="Satoh T."/>
            <person name="Shirai Y."/>
            <person name="Takahashi Y."/>
            <person name="Nakagawa K."/>
            <person name="Okumura K."/>
            <person name="Nagase T."/>
            <person name="Nomura N."/>
            <person name="Kikuchi H."/>
            <person name="Masuho Y."/>
            <person name="Yamashita R."/>
            <person name="Nakai K."/>
            <person name="Yada T."/>
            <person name="Nakamura Y."/>
            <person name="Ohara O."/>
            <person name="Isogai T."/>
            <person name="Sugano S."/>
        </authorList>
    </citation>
    <scope>NUCLEOTIDE SEQUENCE [LARGE SCALE MRNA] (ISOFORM 1)</scope>
    <scope>VARIANT VAL-134</scope>
    <source>
        <tissue>Trachea</tissue>
    </source>
</reference>
<reference evidence="13" key="3">
    <citation type="journal article" date="2004" name="Nature">
        <title>The DNA sequence and comparative analysis of human chromosome 10.</title>
        <authorList>
            <person name="Deloukas P."/>
            <person name="Earthrowl M.E."/>
            <person name="Grafham D.V."/>
            <person name="Rubenfield M."/>
            <person name="French L."/>
            <person name="Steward C.A."/>
            <person name="Sims S.K."/>
            <person name="Jones M.C."/>
            <person name="Searle S."/>
            <person name="Scott C."/>
            <person name="Howe K."/>
            <person name="Hunt S.E."/>
            <person name="Andrews T.D."/>
            <person name="Gilbert J.G.R."/>
            <person name="Swarbreck D."/>
            <person name="Ashurst J.L."/>
            <person name="Taylor A."/>
            <person name="Battles J."/>
            <person name="Bird C.P."/>
            <person name="Ainscough R."/>
            <person name="Almeida J.P."/>
            <person name="Ashwell R.I.S."/>
            <person name="Ambrose K.D."/>
            <person name="Babbage A.K."/>
            <person name="Bagguley C.L."/>
            <person name="Bailey J."/>
            <person name="Banerjee R."/>
            <person name="Bates K."/>
            <person name="Beasley H."/>
            <person name="Bray-Allen S."/>
            <person name="Brown A.J."/>
            <person name="Brown J.Y."/>
            <person name="Burford D.C."/>
            <person name="Burrill W."/>
            <person name="Burton J."/>
            <person name="Cahill P."/>
            <person name="Camire D."/>
            <person name="Carter N.P."/>
            <person name="Chapman J.C."/>
            <person name="Clark S.Y."/>
            <person name="Clarke G."/>
            <person name="Clee C.M."/>
            <person name="Clegg S."/>
            <person name="Corby N."/>
            <person name="Coulson A."/>
            <person name="Dhami P."/>
            <person name="Dutta I."/>
            <person name="Dunn M."/>
            <person name="Faulkner L."/>
            <person name="Frankish A."/>
            <person name="Frankland J.A."/>
            <person name="Garner P."/>
            <person name="Garnett J."/>
            <person name="Gribble S."/>
            <person name="Griffiths C."/>
            <person name="Grocock R."/>
            <person name="Gustafson E."/>
            <person name="Hammond S."/>
            <person name="Harley J.L."/>
            <person name="Hart E."/>
            <person name="Heath P.D."/>
            <person name="Ho T.P."/>
            <person name="Hopkins B."/>
            <person name="Horne J."/>
            <person name="Howden P.J."/>
            <person name="Huckle E."/>
            <person name="Hynds C."/>
            <person name="Johnson C."/>
            <person name="Johnson D."/>
            <person name="Kana A."/>
            <person name="Kay M."/>
            <person name="Kimberley A.M."/>
            <person name="Kershaw J.K."/>
            <person name="Kokkinaki M."/>
            <person name="Laird G.K."/>
            <person name="Lawlor S."/>
            <person name="Lee H.M."/>
            <person name="Leongamornlert D.A."/>
            <person name="Laird G."/>
            <person name="Lloyd C."/>
            <person name="Lloyd D.M."/>
            <person name="Loveland J."/>
            <person name="Lovell J."/>
            <person name="McLaren S."/>
            <person name="McLay K.E."/>
            <person name="McMurray A."/>
            <person name="Mashreghi-Mohammadi M."/>
            <person name="Matthews L."/>
            <person name="Milne S."/>
            <person name="Nickerson T."/>
            <person name="Nguyen M."/>
            <person name="Overton-Larty E."/>
            <person name="Palmer S.A."/>
            <person name="Pearce A.V."/>
            <person name="Peck A.I."/>
            <person name="Pelan S."/>
            <person name="Phillimore B."/>
            <person name="Porter K."/>
            <person name="Rice C.M."/>
            <person name="Rogosin A."/>
            <person name="Ross M.T."/>
            <person name="Sarafidou T."/>
            <person name="Sehra H.K."/>
            <person name="Shownkeen R."/>
            <person name="Skuce C.D."/>
            <person name="Smith M."/>
            <person name="Standring L."/>
            <person name="Sycamore N."/>
            <person name="Tester J."/>
            <person name="Thorpe A."/>
            <person name="Torcasso W."/>
            <person name="Tracey A."/>
            <person name="Tromans A."/>
            <person name="Tsolas J."/>
            <person name="Wall M."/>
            <person name="Walsh J."/>
            <person name="Wang H."/>
            <person name="Weinstock K."/>
            <person name="West A.P."/>
            <person name="Willey D.L."/>
            <person name="Whitehead S.L."/>
            <person name="Wilming L."/>
            <person name="Wray P.W."/>
            <person name="Young L."/>
            <person name="Chen Y."/>
            <person name="Lovering R.C."/>
            <person name="Moschonas N.K."/>
            <person name="Siebert R."/>
            <person name="Fechtel K."/>
            <person name="Bentley D."/>
            <person name="Durbin R.M."/>
            <person name="Hubbard T."/>
            <person name="Doucette-Stamm L."/>
            <person name="Beck S."/>
            <person name="Smith D.R."/>
            <person name="Rogers J."/>
        </authorList>
    </citation>
    <scope>NUCLEOTIDE SEQUENCE [LARGE SCALE GENOMIC DNA]</scope>
    <scope>VARIANT ASN-192</scope>
</reference>
<reference evidence="10 11" key="4">
    <citation type="journal article" date="2004" name="Genome Res.">
        <title>The status, quality, and expansion of the NIH full-length cDNA project: the Mammalian Gene Collection (MGC).</title>
        <authorList>
            <consortium name="The MGC Project Team"/>
        </authorList>
    </citation>
    <scope>NUCLEOTIDE SEQUENCE [LARGE SCALE MRNA] (ISOFORM 2)</scope>
    <source>
        <tissue evidence="11">Placenta</tissue>
    </source>
</reference>
<protein>
    <recommendedName>
        <fullName evidence="10">Annexin A8-like protein 1</fullName>
    </recommendedName>
</protein>
<sequence>MAWWKAWIEQEGVTVKSSSHFNPDPDAETLYKAMKGIGTNEQAIIDVLTKRSNTQRQQIAKSFKAQFGKDLTETLKSELSGKFERLIVALMYPPYRYEAKELHDAMKGLGTKEGVIIEILASRTKNQLREIMKAYEEDYGSSLEEDIQADTSGYLERILVCLLQGSRDDVSSFVDPALALQDAQDLYAAGEKIRGTDEMKFITILCTRSATHLLRVFEEYEKIANKSIEDSIKSETHGSLEEAMLTVVKCTQNLHSYFAERLYYAMKGAGTRDGTLIRNIVSRSEIDLNLIKCHFKKMYGKTLSSMIMEDTSGDYKNALLSLVGSDP</sequence>